<keyword id="KW-0285">Flavoprotein</keyword>
<keyword id="KW-0288">FMN</keyword>
<keyword id="KW-0560">Oxidoreductase</keyword>
<keyword id="KW-0664">Pyridoxine biosynthesis</keyword>
<keyword id="KW-1185">Reference proteome</keyword>
<proteinExistence type="inferred from homology"/>
<protein>
    <recommendedName>
        <fullName evidence="1">Pyridoxine/pyridoxamine 5'-phosphate oxidase</fullName>
        <ecNumber evidence="1">1.4.3.5</ecNumber>
    </recommendedName>
    <alternativeName>
        <fullName evidence="1">PNP/PMP oxidase</fullName>
        <shortName evidence="1">PNPOx</shortName>
    </alternativeName>
    <alternativeName>
        <fullName evidence="1">Pyridoxal 5'-phosphate synthase</fullName>
    </alternativeName>
</protein>
<gene>
    <name evidence="1" type="primary">pdxH</name>
    <name type="ordered locus">Swit_4754</name>
</gene>
<feature type="chain" id="PRO_0000335804" description="Pyridoxine/pyridoxamine 5'-phosphate oxidase">
    <location>
        <begin position="1"/>
        <end position="200"/>
    </location>
</feature>
<feature type="binding site" evidence="1">
    <location>
        <begin position="49"/>
        <end position="54"/>
    </location>
    <ligand>
        <name>FMN</name>
        <dbReference type="ChEBI" id="CHEBI:58210"/>
    </ligand>
</feature>
<feature type="binding site" evidence="1">
    <location>
        <position position="54"/>
    </location>
    <ligand>
        <name>substrate</name>
    </ligand>
</feature>
<feature type="binding site" evidence="1">
    <location>
        <begin position="64"/>
        <end position="65"/>
    </location>
    <ligand>
        <name>FMN</name>
        <dbReference type="ChEBI" id="CHEBI:58210"/>
    </ligand>
</feature>
<feature type="binding site" evidence="1">
    <location>
        <position position="70"/>
    </location>
    <ligand>
        <name>FMN</name>
        <dbReference type="ChEBI" id="CHEBI:58210"/>
    </ligand>
</feature>
<feature type="binding site" evidence="1">
    <location>
        <position position="71"/>
    </location>
    <ligand>
        <name>FMN</name>
        <dbReference type="ChEBI" id="CHEBI:58210"/>
    </ligand>
</feature>
<feature type="binding site" evidence="1">
    <location>
        <position position="93"/>
    </location>
    <ligand>
        <name>FMN</name>
        <dbReference type="ChEBI" id="CHEBI:58210"/>
    </ligand>
</feature>
<feature type="binding site" evidence="1">
    <location>
        <position position="111"/>
    </location>
    <ligand>
        <name>substrate</name>
    </ligand>
</feature>
<feature type="binding site" evidence="1">
    <location>
        <position position="115"/>
    </location>
    <ligand>
        <name>substrate</name>
    </ligand>
</feature>
<feature type="binding site" evidence="1">
    <location>
        <position position="119"/>
    </location>
    <ligand>
        <name>substrate</name>
    </ligand>
</feature>
<feature type="binding site" evidence="1">
    <location>
        <begin position="128"/>
        <end position="129"/>
    </location>
    <ligand>
        <name>FMN</name>
        <dbReference type="ChEBI" id="CHEBI:58210"/>
    </ligand>
</feature>
<feature type="binding site" evidence="1">
    <location>
        <position position="173"/>
    </location>
    <ligand>
        <name>FMN</name>
        <dbReference type="ChEBI" id="CHEBI:58210"/>
    </ligand>
</feature>
<feature type="binding site" evidence="1">
    <location>
        <begin position="179"/>
        <end position="181"/>
    </location>
    <ligand>
        <name>substrate</name>
    </ligand>
</feature>
<feature type="binding site" evidence="1">
    <location>
        <position position="183"/>
    </location>
    <ligand>
        <name>FMN</name>
        <dbReference type="ChEBI" id="CHEBI:58210"/>
    </ligand>
</feature>
<comment type="function">
    <text evidence="1">Catalyzes the oxidation of either pyridoxine 5'-phosphate (PNP) or pyridoxamine 5'-phosphate (PMP) into pyridoxal 5'-phosphate (PLP).</text>
</comment>
<comment type="catalytic activity">
    <reaction evidence="1">
        <text>pyridoxamine 5'-phosphate + O2 + H2O = pyridoxal 5'-phosphate + H2O2 + NH4(+)</text>
        <dbReference type="Rhea" id="RHEA:15817"/>
        <dbReference type="ChEBI" id="CHEBI:15377"/>
        <dbReference type="ChEBI" id="CHEBI:15379"/>
        <dbReference type="ChEBI" id="CHEBI:16240"/>
        <dbReference type="ChEBI" id="CHEBI:28938"/>
        <dbReference type="ChEBI" id="CHEBI:58451"/>
        <dbReference type="ChEBI" id="CHEBI:597326"/>
        <dbReference type="EC" id="1.4.3.5"/>
    </reaction>
</comment>
<comment type="catalytic activity">
    <reaction evidence="1">
        <text>pyridoxine 5'-phosphate + O2 = pyridoxal 5'-phosphate + H2O2</text>
        <dbReference type="Rhea" id="RHEA:15149"/>
        <dbReference type="ChEBI" id="CHEBI:15379"/>
        <dbReference type="ChEBI" id="CHEBI:16240"/>
        <dbReference type="ChEBI" id="CHEBI:58589"/>
        <dbReference type="ChEBI" id="CHEBI:597326"/>
        <dbReference type="EC" id="1.4.3.5"/>
    </reaction>
</comment>
<comment type="cofactor">
    <cofactor evidence="1">
        <name>FMN</name>
        <dbReference type="ChEBI" id="CHEBI:58210"/>
    </cofactor>
    <text evidence="1">Binds 1 FMN per subunit.</text>
</comment>
<comment type="pathway">
    <text evidence="1">Cofactor metabolism; pyridoxal 5'-phosphate salvage; pyridoxal 5'-phosphate from pyridoxamine 5'-phosphate: step 1/1.</text>
</comment>
<comment type="pathway">
    <text evidence="1">Cofactor metabolism; pyridoxal 5'-phosphate salvage; pyridoxal 5'-phosphate from pyridoxine 5'-phosphate: step 1/1.</text>
</comment>
<comment type="subunit">
    <text evidence="1">Homodimer.</text>
</comment>
<comment type="similarity">
    <text evidence="1">Belongs to the pyridoxamine 5'-phosphate oxidase family.</text>
</comment>
<sequence length="200" mass="22901">MSEAQLTTEPTDPHSLFRSWFAEAKASEPNDPEAMAVATVGADGQPSVRMVLLKGHDARGFVFYTNYESRKATQLLETGRAALLFHWKSLRRQVRIEGPVSKVSPEEGDAYFATRHRDSQIGAWASDQSRPLDSRATFEARYEEMLRRFEGGPVPRPPHWSGFRVAPERIEFWQDRAHRLHERRLFTRSGDGWSEGLLYP</sequence>
<dbReference type="EC" id="1.4.3.5" evidence="1"/>
<dbReference type="EMBL" id="CP000699">
    <property type="protein sequence ID" value="ABQ71091.1"/>
    <property type="molecule type" value="Genomic_DNA"/>
</dbReference>
<dbReference type="SMR" id="A5VFM5"/>
<dbReference type="STRING" id="392499.Swit_4754"/>
<dbReference type="PaxDb" id="392499-Swit_4754"/>
<dbReference type="KEGG" id="swi:Swit_4754"/>
<dbReference type="eggNOG" id="COG0259">
    <property type="taxonomic scope" value="Bacteria"/>
</dbReference>
<dbReference type="HOGENOM" id="CLU_032263_2_3_5"/>
<dbReference type="OrthoDB" id="9780392at2"/>
<dbReference type="UniPathway" id="UPA01068">
    <property type="reaction ID" value="UER00304"/>
</dbReference>
<dbReference type="UniPathway" id="UPA01068">
    <property type="reaction ID" value="UER00305"/>
</dbReference>
<dbReference type="Proteomes" id="UP000001989">
    <property type="component" value="Chromosome"/>
</dbReference>
<dbReference type="GO" id="GO:0010181">
    <property type="term" value="F:FMN binding"/>
    <property type="evidence" value="ECO:0007669"/>
    <property type="project" value="UniProtKB-UniRule"/>
</dbReference>
<dbReference type="GO" id="GO:0004733">
    <property type="term" value="F:pyridoxamine phosphate oxidase activity"/>
    <property type="evidence" value="ECO:0007669"/>
    <property type="project" value="UniProtKB-UniRule"/>
</dbReference>
<dbReference type="GO" id="GO:0008615">
    <property type="term" value="P:pyridoxine biosynthetic process"/>
    <property type="evidence" value="ECO:0007669"/>
    <property type="project" value="UniProtKB-KW"/>
</dbReference>
<dbReference type="Gene3D" id="2.30.110.10">
    <property type="entry name" value="Electron Transport, Fmn-binding Protein, Chain A"/>
    <property type="match status" value="1"/>
</dbReference>
<dbReference type="HAMAP" id="MF_01629">
    <property type="entry name" value="PdxH"/>
    <property type="match status" value="1"/>
</dbReference>
<dbReference type="InterPro" id="IPR000659">
    <property type="entry name" value="Pyridox_Oxase"/>
</dbReference>
<dbReference type="InterPro" id="IPR019740">
    <property type="entry name" value="Pyridox_Oxase_CS"/>
</dbReference>
<dbReference type="InterPro" id="IPR011576">
    <property type="entry name" value="Pyridox_Oxase_N"/>
</dbReference>
<dbReference type="InterPro" id="IPR019576">
    <property type="entry name" value="Pyridoxamine_oxidase_dimer_C"/>
</dbReference>
<dbReference type="InterPro" id="IPR012349">
    <property type="entry name" value="Split_barrel_FMN-bd"/>
</dbReference>
<dbReference type="NCBIfam" id="TIGR00558">
    <property type="entry name" value="pdxH"/>
    <property type="match status" value="1"/>
</dbReference>
<dbReference type="NCBIfam" id="NF004231">
    <property type="entry name" value="PRK05679.1"/>
    <property type="match status" value="1"/>
</dbReference>
<dbReference type="PANTHER" id="PTHR10851:SF0">
    <property type="entry name" value="PYRIDOXINE-5'-PHOSPHATE OXIDASE"/>
    <property type="match status" value="1"/>
</dbReference>
<dbReference type="PANTHER" id="PTHR10851">
    <property type="entry name" value="PYRIDOXINE-5-PHOSPHATE OXIDASE"/>
    <property type="match status" value="1"/>
</dbReference>
<dbReference type="Pfam" id="PF10590">
    <property type="entry name" value="PNP_phzG_C"/>
    <property type="match status" value="1"/>
</dbReference>
<dbReference type="Pfam" id="PF01243">
    <property type="entry name" value="PNPOx_N"/>
    <property type="match status" value="1"/>
</dbReference>
<dbReference type="PIRSF" id="PIRSF000190">
    <property type="entry name" value="Pyd_amn-ph_oxd"/>
    <property type="match status" value="1"/>
</dbReference>
<dbReference type="SUPFAM" id="SSF50475">
    <property type="entry name" value="FMN-binding split barrel"/>
    <property type="match status" value="1"/>
</dbReference>
<dbReference type="PROSITE" id="PS01064">
    <property type="entry name" value="PYRIDOX_OXIDASE"/>
    <property type="match status" value="1"/>
</dbReference>
<accession>A5VFM5</accession>
<name>PDXH_RHIWR</name>
<organism>
    <name type="scientific">Rhizorhabdus wittichii (strain DSM 6014 / CCUG 31198 / JCM 15750 / NBRC 105917 / EY 4224 / RW1)</name>
    <name type="common">Sphingomonas wittichii</name>
    <dbReference type="NCBI Taxonomy" id="392499"/>
    <lineage>
        <taxon>Bacteria</taxon>
        <taxon>Pseudomonadati</taxon>
        <taxon>Pseudomonadota</taxon>
        <taxon>Alphaproteobacteria</taxon>
        <taxon>Sphingomonadales</taxon>
        <taxon>Sphingomonadaceae</taxon>
        <taxon>Rhizorhabdus</taxon>
    </lineage>
</organism>
<reference key="1">
    <citation type="journal article" date="2010" name="J. Bacteriol.">
        <title>Genome sequence of the dioxin-mineralizing bacterium Sphingomonas wittichii RW1.</title>
        <authorList>
            <person name="Miller T.R."/>
            <person name="Delcher A.L."/>
            <person name="Salzberg S.L."/>
            <person name="Saunders E."/>
            <person name="Detter J.C."/>
            <person name="Halden R.U."/>
        </authorList>
    </citation>
    <scope>NUCLEOTIDE SEQUENCE [LARGE SCALE GENOMIC DNA]</scope>
    <source>
        <strain>DSM 6014 / CCUG 31198 / JCM 15750 / NBRC 105917 / EY 4224 / RW1</strain>
    </source>
</reference>
<evidence type="ECO:0000255" key="1">
    <source>
        <dbReference type="HAMAP-Rule" id="MF_01629"/>
    </source>
</evidence>